<reference key="1">
    <citation type="journal article" date="2009" name="Proc. Natl. Acad. Sci. U.S.A.">
        <title>Biogeography of the Sulfolobus islandicus pan-genome.</title>
        <authorList>
            <person name="Reno M.L."/>
            <person name="Held N.L."/>
            <person name="Fields C.J."/>
            <person name="Burke P.V."/>
            <person name="Whitaker R.J."/>
        </authorList>
    </citation>
    <scope>NUCLEOTIDE SEQUENCE [LARGE SCALE GENOMIC DNA]</scope>
    <source>
        <strain>M.16.4 / Kamchatka #3</strain>
    </source>
</reference>
<evidence type="ECO:0000255" key="1">
    <source>
        <dbReference type="HAMAP-Rule" id="MF_00411"/>
    </source>
</evidence>
<name>RPO1C_SACI6</name>
<protein>
    <recommendedName>
        <fullName evidence="1">DNA-directed RNA polymerase subunit Rpo1C</fullName>
        <ecNumber evidence="1">2.7.7.6</ecNumber>
    </recommendedName>
    <alternativeName>
        <fullName evidence="1">DNA-directed RNA polymerase subunit A''</fullName>
    </alternativeName>
</protein>
<organism>
    <name type="scientific">Saccharolobus islandicus (strain M.16.4 / Kamchatka #3)</name>
    <name type="common">Sulfolobus islandicus</name>
    <dbReference type="NCBI Taxonomy" id="426118"/>
    <lineage>
        <taxon>Archaea</taxon>
        <taxon>Thermoproteota</taxon>
        <taxon>Thermoprotei</taxon>
        <taxon>Sulfolobales</taxon>
        <taxon>Sulfolobaceae</taxon>
        <taxon>Saccharolobus</taxon>
    </lineage>
</organism>
<sequence>MIDEKDKSYLEEKVKQASNILPQKIVEDLKNLISNKEVLVTRDEIDKIFDLAIKEYSEGLIAPGEAIGIVAAQSVGEPGTQMTLRTFHFAGIRELNVTLGLPRLIEIVDAKKVPSTPMMTIYLTDEYKHDKEKALEVARKLEYTKIENVVSSTSIDIASMSIILQLDNEMLKDKGVTVDDVKKAINRLKLGEFVIDESEGNTLNISFANIDSIAALFKLRDKILNTKIKGIKGIKRAIVQKKGDEYIILTDGSNLSGVLSVKGVDIAKVETNNIREIEEVFGIEAAREIIIREISKVLAEQGLDVDMRHILLVADVMTRTGVVRQIGRHGVTGEKNSVLARAAFEVTVKHLLDAAARGDVEEFKGVVENIIIGHPIKLGTGMVELTMRPILR</sequence>
<gene>
    <name evidence="1" type="primary">rpo1C</name>
    <name evidence="1" type="synonym">rpoA2</name>
    <name type="ordered locus">M164_1920</name>
</gene>
<accession>C4KIV9</accession>
<dbReference type="EC" id="2.7.7.6" evidence="1"/>
<dbReference type="EMBL" id="CP001402">
    <property type="protein sequence ID" value="ACR42523.1"/>
    <property type="molecule type" value="Genomic_DNA"/>
</dbReference>
<dbReference type="RefSeq" id="WP_012711886.1">
    <property type="nucleotide sequence ID" value="NC_012726.1"/>
</dbReference>
<dbReference type="SMR" id="C4KIV9"/>
<dbReference type="GeneID" id="84062225"/>
<dbReference type="KEGG" id="sid:M164_1920"/>
<dbReference type="HOGENOM" id="CLU_037097_1_0_2"/>
<dbReference type="Proteomes" id="UP000001479">
    <property type="component" value="Chromosome"/>
</dbReference>
<dbReference type="GO" id="GO:0005737">
    <property type="term" value="C:cytoplasm"/>
    <property type="evidence" value="ECO:0007669"/>
    <property type="project" value="UniProtKB-SubCell"/>
</dbReference>
<dbReference type="GO" id="GO:0000428">
    <property type="term" value="C:DNA-directed RNA polymerase complex"/>
    <property type="evidence" value="ECO:0007669"/>
    <property type="project" value="UniProtKB-KW"/>
</dbReference>
<dbReference type="GO" id="GO:0003677">
    <property type="term" value="F:DNA binding"/>
    <property type="evidence" value="ECO:0007669"/>
    <property type="project" value="UniProtKB-UniRule"/>
</dbReference>
<dbReference type="GO" id="GO:0003899">
    <property type="term" value="F:DNA-directed RNA polymerase activity"/>
    <property type="evidence" value="ECO:0007669"/>
    <property type="project" value="UniProtKB-UniRule"/>
</dbReference>
<dbReference type="GO" id="GO:0006351">
    <property type="term" value="P:DNA-templated transcription"/>
    <property type="evidence" value="ECO:0007669"/>
    <property type="project" value="UniProtKB-UniRule"/>
</dbReference>
<dbReference type="CDD" id="cd06528">
    <property type="entry name" value="RNAP_A"/>
    <property type="match status" value="1"/>
</dbReference>
<dbReference type="Gene3D" id="1.10.150.390">
    <property type="match status" value="1"/>
</dbReference>
<dbReference type="HAMAP" id="MF_00411">
    <property type="entry name" value="RNApol_arch_Rpo1C"/>
    <property type="match status" value="1"/>
</dbReference>
<dbReference type="InterPro" id="IPR045867">
    <property type="entry name" value="DNA-dir_RpoC_beta_prime"/>
</dbReference>
<dbReference type="InterPro" id="IPR007081">
    <property type="entry name" value="RNA_pol_Rpb1_5"/>
</dbReference>
<dbReference type="InterPro" id="IPR012757">
    <property type="entry name" value="RPO1C"/>
</dbReference>
<dbReference type="NCBIfam" id="TIGR02389">
    <property type="entry name" value="RNA_pol_rpoA2"/>
    <property type="match status" value="1"/>
</dbReference>
<dbReference type="PANTHER" id="PTHR19376">
    <property type="entry name" value="DNA-DIRECTED RNA POLYMERASE"/>
    <property type="match status" value="1"/>
</dbReference>
<dbReference type="PANTHER" id="PTHR19376:SF32">
    <property type="entry name" value="DNA-DIRECTED RNA POLYMERASE III SUBUNIT RPC1"/>
    <property type="match status" value="1"/>
</dbReference>
<dbReference type="Pfam" id="PF04998">
    <property type="entry name" value="RNA_pol_Rpb1_5"/>
    <property type="match status" value="1"/>
</dbReference>
<dbReference type="SUPFAM" id="SSF64484">
    <property type="entry name" value="beta and beta-prime subunits of DNA dependent RNA-polymerase"/>
    <property type="match status" value="1"/>
</dbReference>
<feature type="chain" id="PRO_1000205984" description="DNA-directed RNA polymerase subunit Rpo1C">
    <location>
        <begin position="1"/>
        <end position="392"/>
    </location>
</feature>
<comment type="function">
    <text evidence="1">DNA-dependent RNA polymerase (RNAP) catalyzes the transcription of DNA into RNA using the four ribonucleoside triphosphates as substrates. Forms part of the jaw domain.</text>
</comment>
<comment type="catalytic activity">
    <reaction evidence="1">
        <text>RNA(n) + a ribonucleoside 5'-triphosphate = RNA(n+1) + diphosphate</text>
        <dbReference type="Rhea" id="RHEA:21248"/>
        <dbReference type="Rhea" id="RHEA-COMP:14527"/>
        <dbReference type="Rhea" id="RHEA-COMP:17342"/>
        <dbReference type="ChEBI" id="CHEBI:33019"/>
        <dbReference type="ChEBI" id="CHEBI:61557"/>
        <dbReference type="ChEBI" id="CHEBI:140395"/>
        <dbReference type="EC" id="2.7.7.6"/>
    </reaction>
</comment>
<comment type="subunit">
    <text evidence="1">Part of the RNA polymerase complex.</text>
</comment>
<comment type="subcellular location">
    <subcellularLocation>
        <location evidence="1">Cytoplasm</location>
    </subcellularLocation>
</comment>
<comment type="similarity">
    <text evidence="1">Belongs to the RNA polymerase beta' chain family.</text>
</comment>
<keyword id="KW-0963">Cytoplasm</keyword>
<keyword id="KW-0238">DNA-binding</keyword>
<keyword id="KW-0240">DNA-directed RNA polymerase</keyword>
<keyword id="KW-0548">Nucleotidyltransferase</keyword>
<keyword id="KW-0804">Transcription</keyword>
<keyword id="KW-0808">Transferase</keyword>
<proteinExistence type="inferred from homology"/>